<gene>
    <name evidence="1" type="primary">rpsM</name>
    <name type="ordered locus">CHU_3139</name>
</gene>
<name>RS13_CYTH3</name>
<accession>Q11QD5</accession>
<reference key="1">
    <citation type="journal article" date="2007" name="Appl. Environ. Microbiol.">
        <title>Genome sequence of the cellulolytic gliding bacterium Cytophaga hutchinsonii.</title>
        <authorList>
            <person name="Xie G."/>
            <person name="Bruce D.C."/>
            <person name="Challacombe J.F."/>
            <person name="Chertkov O."/>
            <person name="Detter J.C."/>
            <person name="Gilna P."/>
            <person name="Han C.S."/>
            <person name="Lucas S."/>
            <person name="Misra M."/>
            <person name="Myers G.L."/>
            <person name="Richardson P."/>
            <person name="Tapia R."/>
            <person name="Thayer N."/>
            <person name="Thompson L.S."/>
            <person name="Brettin T.S."/>
            <person name="Henrissat B."/>
            <person name="Wilson D.B."/>
            <person name="McBride M.J."/>
        </authorList>
    </citation>
    <scope>NUCLEOTIDE SEQUENCE [LARGE SCALE GENOMIC DNA]</scope>
    <source>
        <strain>ATCC 33406 / DSM 1761 / JCM 20678 / CIP 103989 / IAM 12607 / NBRC 15051 / NCIMB 9469 / D465</strain>
    </source>
</reference>
<feature type="chain" id="PRO_0000306593" description="Small ribosomal subunit protein uS13">
    <location>
        <begin position="1"/>
        <end position="125"/>
    </location>
</feature>
<feature type="region of interest" description="Disordered" evidence="2">
    <location>
        <begin position="95"/>
        <end position="125"/>
    </location>
</feature>
<proteinExistence type="inferred from homology"/>
<keyword id="KW-1185">Reference proteome</keyword>
<keyword id="KW-0687">Ribonucleoprotein</keyword>
<keyword id="KW-0689">Ribosomal protein</keyword>
<keyword id="KW-0694">RNA-binding</keyword>
<keyword id="KW-0699">rRNA-binding</keyword>
<keyword id="KW-0820">tRNA-binding</keyword>
<sequence>MARISGVDIPDNKRGEVSLTYIYGIGRNSAQSILTKAGVNWDKKVSEWNDDEANAVRAIIASEHKTEGALKSEVQLSIKRLMDIGCYRGLRHRKGLPVRGQRTKNNCRTRKGKRKTVANKKKATK</sequence>
<comment type="function">
    <text evidence="1">Located at the top of the head of the 30S subunit, it contacts several helices of the 16S rRNA. In the 70S ribosome it contacts the 23S rRNA (bridge B1a) and protein L5 of the 50S subunit (bridge B1b), connecting the 2 subunits; these bridges are implicated in subunit movement. Contacts the tRNAs in the A and P-sites.</text>
</comment>
<comment type="subunit">
    <text evidence="1">Part of the 30S ribosomal subunit. Forms a loose heterodimer with protein S19. Forms two bridges to the 50S subunit in the 70S ribosome.</text>
</comment>
<comment type="similarity">
    <text evidence="1">Belongs to the universal ribosomal protein uS13 family.</text>
</comment>
<dbReference type="EMBL" id="CP000383">
    <property type="protein sequence ID" value="ABG60379.1"/>
    <property type="molecule type" value="Genomic_DNA"/>
</dbReference>
<dbReference type="RefSeq" id="WP_011586488.1">
    <property type="nucleotide sequence ID" value="NC_008255.1"/>
</dbReference>
<dbReference type="SMR" id="Q11QD5"/>
<dbReference type="STRING" id="269798.CHU_3139"/>
<dbReference type="KEGG" id="chu:CHU_3139"/>
<dbReference type="eggNOG" id="COG0099">
    <property type="taxonomic scope" value="Bacteria"/>
</dbReference>
<dbReference type="HOGENOM" id="CLU_103849_1_2_10"/>
<dbReference type="OrthoDB" id="9803610at2"/>
<dbReference type="Proteomes" id="UP000001822">
    <property type="component" value="Chromosome"/>
</dbReference>
<dbReference type="GO" id="GO:0005829">
    <property type="term" value="C:cytosol"/>
    <property type="evidence" value="ECO:0007669"/>
    <property type="project" value="TreeGrafter"/>
</dbReference>
<dbReference type="GO" id="GO:0015935">
    <property type="term" value="C:small ribosomal subunit"/>
    <property type="evidence" value="ECO:0007669"/>
    <property type="project" value="TreeGrafter"/>
</dbReference>
<dbReference type="GO" id="GO:0019843">
    <property type="term" value="F:rRNA binding"/>
    <property type="evidence" value="ECO:0007669"/>
    <property type="project" value="UniProtKB-UniRule"/>
</dbReference>
<dbReference type="GO" id="GO:0003735">
    <property type="term" value="F:structural constituent of ribosome"/>
    <property type="evidence" value="ECO:0007669"/>
    <property type="project" value="InterPro"/>
</dbReference>
<dbReference type="GO" id="GO:0000049">
    <property type="term" value="F:tRNA binding"/>
    <property type="evidence" value="ECO:0007669"/>
    <property type="project" value="UniProtKB-UniRule"/>
</dbReference>
<dbReference type="GO" id="GO:0006412">
    <property type="term" value="P:translation"/>
    <property type="evidence" value="ECO:0007669"/>
    <property type="project" value="UniProtKB-UniRule"/>
</dbReference>
<dbReference type="FunFam" id="1.10.8.50:FF:000001">
    <property type="entry name" value="30S ribosomal protein S13"/>
    <property type="match status" value="1"/>
</dbReference>
<dbReference type="FunFam" id="4.10.910.10:FF:000001">
    <property type="entry name" value="30S ribosomal protein S13"/>
    <property type="match status" value="1"/>
</dbReference>
<dbReference type="Gene3D" id="1.10.8.50">
    <property type="match status" value="1"/>
</dbReference>
<dbReference type="Gene3D" id="4.10.910.10">
    <property type="entry name" value="30s ribosomal protein s13, domain 2"/>
    <property type="match status" value="1"/>
</dbReference>
<dbReference type="HAMAP" id="MF_01315">
    <property type="entry name" value="Ribosomal_uS13"/>
    <property type="match status" value="1"/>
</dbReference>
<dbReference type="InterPro" id="IPR027437">
    <property type="entry name" value="Rbsml_uS13_C"/>
</dbReference>
<dbReference type="InterPro" id="IPR001892">
    <property type="entry name" value="Ribosomal_uS13"/>
</dbReference>
<dbReference type="InterPro" id="IPR010979">
    <property type="entry name" value="Ribosomal_uS13-like_H2TH"/>
</dbReference>
<dbReference type="InterPro" id="IPR019980">
    <property type="entry name" value="Ribosomal_uS13_bac-type"/>
</dbReference>
<dbReference type="InterPro" id="IPR018269">
    <property type="entry name" value="Ribosomal_uS13_CS"/>
</dbReference>
<dbReference type="NCBIfam" id="TIGR03631">
    <property type="entry name" value="uS13_bact"/>
    <property type="match status" value="1"/>
</dbReference>
<dbReference type="PANTHER" id="PTHR10871">
    <property type="entry name" value="30S RIBOSOMAL PROTEIN S13/40S RIBOSOMAL PROTEIN S18"/>
    <property type="match status" value="1"/>
</dbReference>
<dbReference type="PANTHER" id="PTHR10871:SF1">
    <property type="entry name" value="SMALL RIBOSOMAL SUBUNIT PROTEIN US13M"/>
    <property type="match status" value="1"/>
</dbReference>
<dbReference type="Pfam" id="PF00416">
    <property type="entry name" value="Ribosomal_S13"/>
    <property type="match status" value="1"/>
</dbReference>
<dbReference type="PIRSF" id="PIRSF002134">
    <property type="entry name" value="Ribosomal_S13"/>
    <property type="match status" value="1"/>
</dbReference>
<dbReference type="SUPFAM" id="SSF46946">
    <property type="entry name" value="S13-like H2TH domain"/>
    <property type="match status" value="1"/>
</dbReference>
<dbReference type="PROSITE" id="PS00646">
    <property type="entry name" value="RIBOSOMAL_S13_1"/>
    <property type="match status" value="1"/>
</dbReference>
<dbReference type="PROSITE" id="PS50159">
    <property type="entry name" value="RIBOSOMAL_S13_2"/>
    <property type="match status" value="1"/>
</dbReference>
<organism>
    <name type="scientific">Cytophaga hutchinsonii (strain ATCC 33406 / DSM 1761 / CIP 103989 / NBRC 15051 / NCIMB 9469 / D465)</name>
    <dbReference type="NCBI Taxonomy" id="269798"/>
    <lineage>
        <taxon>Bacteria</taxon>
        <taxon>Pseudomonadati</taxon>
        <taxon>Bacteroidota</taxon>
        <taxon>Cytophagia</taxon>
        <taxon>Cytophagales</taxon>
        <taxon>Cytophagaceae</taxon>
        <taxon>Cytophaga</taxon>
    </lineage>
</organism>
<evidence type="ECO:0000255" key="1">
    <source>
        <dbReference type="HAMAP-Rule" id="MF_01315"/>
    </source>
</evidence>
<evidence type="ECO:0000256" key="2">
    <source>
        <dbReference type="SAM" id="MobiDB-lite"/>
    </source>
</evidence>
<evidence type="ECO:0000305" key="3"/>
<protein>
    <recommendedName>
        <fullName evidence="1">Small ribosomal subunit protein uS13</fullName>
    </recommendedName>
    <alternativeName>
        <fullName evidence="3">30S ribosomal protein S13</fullName>
    </alternativeName>
</protein>